<organism>
    <name type="scientific">Symbiobacterium thermophilum (strain DSM 24528 / JCM 14929 / IAM 14863 / T)</name>
    <dbReference type="NCBI Taxonomy" id="292459"/>
    <lineage>
        <taxon>Bacteria</taxon>
        <taxon>Bacillati</taxon>
        <taxon>Bacillota</taxon>
        <taxon>Clostridia</taxon>
        <taxon>Eubacteriales</taxon>
        <taxon>Symbiobacteriaceae</taxon>
        <taxon>Symbiobacterium</taxon>
    </lineage>
</organism>
<name>MRNC_SYMTH</name>
<accession>Q67JQ0</accession>
<comment type="function">
    <text evidence="1">Involved in correct processing of both the 5' and 3' ends of 23S rRNA precursor. Processes 30S rRNA precursor transcript even in absence of ribonuclease 3 (Rnc); Rnc processes 30S rRNA into smaller rRNA precursors.</text>
</comment>
<comment type="cofactor">
    <cofactor evidence="1">
        <name>Mg(2+)</name>
        <dbReference type="ChEBI" id="CHEBI:18420"/>
    </cofactor>
</comment>
<comment type="subunit">
    <text evidence="1">Homodimer.</text>
</comment>
<comment type="subcellular location">
    <subcellularLocation>
        <location evidence="1">Cytoplasm</location>
    </subcellularLocation>
</comment>
<comment type="similarity">
    <text evidence="1">Belongs to the MrnC RNase family.</text>
</comment>
<reference key="1">
    <citation type="journal article" date="2004" name="Nucleic Acids Res.">
        <title>Genome sequence of Symbiobacterium thermophilum, an uncultivable bacterium that depends on microbial commensalism.</title>
        <authorList>
            <person name="Ueda K."/>
            <person name="Yamashita A."/>
            <person name="Ishikawa J."/>
            <person name="Shimada M."/>
            <person name="Watsuji T."/>
            <person name="Morimura K."/>
            <person name="Ikeda H."/>
            <person name="Hattori M."/>
            <person name="Beppu T."/>
        </authorList>
    </citation>
    <scope>NUCLEOTIDE SEQUENCE [LARGE SCALE GENOMIC DNA]</scope>
    <source>
        <strain>DSM 24528 / JCM 14929 / IAM 14863 / T</strain>
    </source>
</reference>
<dbReference type="EC" id="3.1.26.-" evidence="1"/>
<dbReference type="EMBL" id="AP006840">
    <property type="protein sequence ID" value="BAD42100.1"/>
    <property type="molecule type" value="Genomic_DNA"/>
</dbReference>
<dbReference type="RefSeq" id="WP_011197232.1">
    <property type="nucleotide sequence ID" value="NC_006177.1"/>
</dbReference>
<dbReference type="SMR" id="Q67JQ0"/>
<dbReference type="STRING" id="292459.STH3118"/>
<dbReference type="KEGG" id="sth:STH3118"/>
<dbReference type="eggNOG" id="COG1939">
    <property type="taxonomic scope" value="Bacteria"/>
</dbReference>
<dbReference type="HOGENOM" id="CLU_091169_2_1_9"/>
<dbReference type="OrthoDB" id="46571at2"/>
<dbReference type="Proteomes" id="UP000000417">
    <property type="component" value="Chromosome"/>
</dbReference>
<dbReference type="GO" id="GO:0005737">
    <property type="term" value="C:cytoplasm"/>
    <property type="evidence" value="ECO:0007669"/>
    <property type="project" value="UniProtKB-SubCell"/>
</dbReference>
<dbReference type="GO" id="GO:0004525">
    <property type="term" value="F:ribonuclease III activity"/>
    <property type="evidence" value="ECO:0007669"/>
    <property type="project" value="InterPro"/>
</dbReference>
<dbReference type="GO" id="GO:0019843">
    <property type="term" value="F:rRNA binding"/>
    <property type="evidence" value="ECO:0007669"/>
    <property type="project" value="UniProtKB-UniRule"/>
</dbReference>
<dbReference type="GO" id="GO:0006364">
    <property type="term" value="P:rRNA processing"/>
    <property type="evidence" value="ECO:0007669"/>
    <property type="project" value="UniProtKB-UniRule"/>
</dbReference>
<dbReference type="Gene3D" id="1.10.1520.10">
    <property type="entry name" value="Ribonuclease III domain"/>
    <property type="match status" value="1"/>
</dbReference>
<dbReference type="HAMAP" id="MF_01468">
    <property type="entry name" value="RNase_Mini_III"/>
    <property type="match status" value="1"/>
</dbReference>
<dbReference type="InterPro" id="IPR008226">
    <property type="entry name" value="Mini3_fam"/>
</dbReference>
<dbReference type="InterPro" id="IPR000999">
    <property type="entry name" value="RNase_III_dom"/>
</dbReference>
<dbReference type="InterPro" id="IPR036389">
    <property type="entry name" value="RNase_III_sf"/>
</dbReference>
<dbReference type="PANTHER" id="PTHR34276">
    <property type="entry name" value="MINI-RIBONUCLEASE 3"/>
    <property type="match status" value="1"/>
</dbReference>
<dbReference type="PANTHER" id="PTHR34276:SF1">
    <property type="entry name" value="MINI-RIBONUCLEASE 3"/>
    <property type="match status" value="1"/>
</dbReference>
<dbReference type="Pfam" id="PF00636">
    <property type="entry name" value="Ribonuclease_3"/>
    <property type="match status" value="1"/>
</dbReference>
<dbReference type="PIRSF" id="PIRSF005520">
    <property type="entry name" value="UCP005520"/>
    <property type="match status" value="1"/>
</dbReference>
<dbReference type="SMART" id="SM00535">
    <property type="entry name" value="RIBOc"/>
    <property type="match status" value="1"/>
</dbReference>
<dbReference type="SUPFAM" id="SSF69065">
    <property type="entry name" value="RNase III domain-like"/>
    <property type="match status" value="1"/>
</dbReference>
<gene>
    <name evidence="1" type="primary">mrnC</name>
    <name type="ordered locus">STH3118</name>
</gene>
<sequence length="130" mass="14382">MRLANPLTLPPLTLAYLGDALYEAFVRERLLERGYVRVNDLHRHALRYVQATAQAAILHHLMPALTEQEQDVVRRGRNAKGHGAPKSADPAEYAASTGFEALVGYLYLAGQAERLSEVLQAAADFIERGQ</sequence>
<proteinExistence type="inferred from homology"/>
<protein>
    <recommendedName>
        <fullName evidence="1">Mini-ribonuclease 3</fullName>
        <shortName evidence="1">Mini-3</shortName>
        <shortName evidence="1">Mini-RNase 3</shortName>
        <ecNumber evidence="1">3.1.26.-</ecNumber>
    </recommendedName>
    <alternativeName>
        <fullName evidence="1">Mini-RNase III</fullName>
        <shortName evidence="1">Mini-III</shortName>
    </alternativeName>
</protein>
<evidence type="ECO:0000255" key="1">
    <source>
        <dbReference type="HAMAP-Rule" id="MF_01468"/>
    </source>
</evidence>
<evidence type="ECO:0000256" key="2">
    <source>
        <dbReference type="SAM" id="MobiDB-lite"/>
    </source>
</evidence>
<feature type="chain" id="PRO_0000415993" description="Mini-ribonuclease 3">
    <location>
        <begin position="1"/>
        <end position="130"/>
    </location>
</feature>
<feature type="region of interest" description="Disordered" evidence="2">
    <location>
        <begin position="69"/>
        <end position="91"/>
    </location>
</feature>
<feature type="active site" evidence="1">
    <location>
        <position position="19"/>
    </location>
</feature>
<keyword id="KW-0963">Cytoplasm</keyword>
<keyword id="KW-0255">Endonuclease</keyword>
<keyword id="KW-0378">Hydrolase</keyword>
<keyword id="KW-0460">Magnesium</keyword>
<keyword id="KW-0540">Nuclease</keyword>
<keyword id="KW-1185">Reference proteome</keyword>
<keyword id="KW-0690">Ribosome biogenesis</keyword>
<keyword id="KW-0694">RNA-binding</keyword>
<keyword id="KW-0698">rRNA processing</keyword>
<keyword id="KW-0699">rRNA-binding</keyword>